<sequence>MKDFADIPALMAEIGTAAKAAAAELAFAPADQRAQALTAAADAVWARRDEIIAANARDLDYGRDKGLSPAMMDRLALDEARIQGIVDGLRAVAAQDDPVGAVLSEWDRPTGLHIRRVRTPLGVIGVIYESRPNVTADAGALCLKSGNAVILRGGSESFHSSSLIHACLRDGLRAADLPETAIQLVPTRDRAAVGEMLTMTDTIDVIIPRGGKGLVGRVQAEARVPVFAHLEGICHIYVDADADPDKTARVILNAKTRRTGICGAAECLLVDRAWYDRNGATFIADLIAAGVEVRADDTLQAIPGTVPAKADDFGREFLDMIIAARVVDGVDGAIAHIRRYGSQHTDCILTENDATAARFFQRLDSAILMRNASTQFADGGEFGMGAEIGIATGKMHARGPVGAEQLTSFKYLVEGDGTIRA</sequence>
<keyword id="KW-0028">Amino-acid biosynthesis</keyword>
<keyword id="KW-0963">Cytoplasm</keyword>
<keyword id="KW-0521">NADP</keyword>
<keyword id="KW-0560">Oxidoreductase</keyword>
<keyword id="KW-0641">Proline biosynthesis</keyword>
<keyword id="KW-1185">Reference proteome</keyword>
<organism>
    <name type="scientific">Dinoroseobacter shibae (strain DSM 16493 / NCIMB 14021 / DFL 12)</name>
    <dbReference type="NCBI Taxonomy" id="398580"/>
    <lineage>
        <taxon>Bacteria</taxon>
        <taxon>Pseudomonadati</taxon>
        <taxon>Pseudomonadota</taxon>
        <taxon>Alphaproteobacteria</taxon>
        <taxon>Rhodobacterales</taxon>
        <taxon>Roseobacteraceae</taxon>
        <taxon>Dinoroseobacter</taxon>
    </lineage>
</organism>
<dbReference type="EC" id="1.2.1.41" evidence="1"/>
<dbReference type="EMBL" id="CP000830">
    <property type="protein sequence ID" value="ABV93211.1"/>
    <property type="molecule type" value="Genomic_DNA"/>
</dbReference>
<dbReference type="RefSeq" id="WP_012178141.1">
    <property type="nucleotide sequence ID" value="NC_009952.1"/>
</dbReference>
<dbReference type="SMR" id="A8LK12"/>
<dbReference type="STRING" id="398580.Dshi_1469"/>
<dbReference type="KEGG" id="dsh:Dshi_1469"/>
<dbReference type="eggNOG" id="COG0014">
    <property type="taxonomic scope" value="Bacteria"/>
</dbReference>
<dbReference type="HOGENOM" id="CLU_030231_0_0_5"/>
<dbReference type="OrthoDB" id="9809970at2"/>
<dbReference type="UniPathway" id="UPA00098">
    <property type="reaction ID" value="UER00360"/>
</dbReference>
<dbReference type="Proteomes" id="UP000006833">
    <property type="component" value="Chromosome"/>
</dbReference>
<dbReference type="GO" id="GO:0005737">
    <property type="term" value="C:cytoplasm"/>
    <property type="evidence" value="ECO:0007669"/>
    <property type="project" value="UniProtKB-SubCell"/>
</dbReference>
<dbReference type="GO" id="GO:0004350">
    <property type="term" value="F:glutamate-5-semialdehyde dehydrogenase activity"/>
    <property type="evidence" value="ECO:0007669"/>
    <property type="project" value="UniProtKB-UniRule"/>
</dbReference>
<dbReference type="GO" id="GO:0050661">
    <property type="term" value="F:NADP binding"/>
    <property type="evidence" value="ECO:0007669"/>
    <property type="project" value="InterPro"/>
</dbReference>
<dbReference type="GO" id="GO:0055129">
    <property type="term" value="P:L-proline biosynthetic process"/>
    <property type="evidence" value="ECO:0007669"/>
    <property type="project" value="UniProtKB-UniRule"/>
</dbReference>
<dbReference type="CDD" id="cd07079">
    <property type="entry name" value="ALDH_F18-19_ProA-GPR"/>
    <property type="match status" value="1"/>
</dbReference>
<dbReference type="Gene3D" id="3.40.605.10">
    <property type="entry name" value="Aldehyde Dehydrogenase, Chain A, domain 1"/>
    <property type="match status" value="1"/>
</dbReference>
<dbReference type="Gene3D" id="3.40.309.10">
    <property type="entry name" value="Aldehyde Dehydrogenase, Chain A, domain 2"/>
    <property type="match status" value="1"/>
</dbReference>
<dbReference type="HAMAP" id="MF_00412">
    <property type="entry name" value="ProA"/>
    <property type="match status" value="1"/>
</dbReference>
<dbReference type="InterPro" id="IPR016161">
    <property type="entry name" value="Ald_DH/histidinol_DH"/>
</dbReference>
<dbReference type="InterPro" id="IPR016163">
    <property type="entry name" value="Ald_DH_C"/>
</dbReference>
<dbReference type="InterPro" id="IPR016162">
    <property type="entry name" value="Ald_DH_N"/>
</dbReference>
<dbReference type="InterPro" id="IPR015590">
    <property type="entry name" value="Aldehyde_DH_dom"/>
</dbReference>
<dbReference type="InterPro" id="IPR020593">
    <property type="entry name" value="G-glutamylP_reductase_CS"/>
</dbReference>
<dbReference type="InterPro" id="IPR012134">
    <property type="entry name" value="Glu-5-SA_DH"/>
</dbReference>
<dbReference type="InterPro" id="IPR000965">
    <property type="entry name" value="GPR_dom"/>
</dbReference>
<dbReference type="NCBIfam" id="NF001221">
    <property type="entry name" value="PRK00197.1"/>
    <property type="match status" value="1"/>
</dbReference>
<dbReference type="NCBIfam" id="TIGR00407">
    <property type="entry name" value="proA"/>
    <property type="match status" value="1"/>
</dbReference>
<dbReference type="PANTHER" id="PTHR11063:SF8">
    <property type="entry name" value="DELTA-1-PYRROLINE-5-CARBOXYLATE SYNTHASE"/>
    <property type="match status" value="1"/>
</dbReference>
<dbReference type="PANTHER" id="PTHR11063">
    <property type="entry name" value="GLUTAMATE SEMIALDEHYDE DEHYDROGENASE"/>
    <property type="match status" value="1"/>
</dbReference>
<dbReference type="Pfam" id="PF00171">
    <property type="entry name" value="Aldedh"/>
    <property type="match status" value="1"/>
</dbReference>
<dbReference type="PIRSF" id="PIRSF000151">
    <property type="entry name" value="GPR"/>
    <property type="match status" value="1"/>
</dbReference>
<dbReference type="SUPFAM" id="SSF53720">
    <property type="entry name" value="ALDH-like"/>
    <property type="match status" value="1"/>
</dbReference>
<dbReference type="PROSITE" id="PS01223">
    <property type="entry name" value="PROA"/>
    <property type="match status" value="1"/>
</dbReference>
<evidence type="ECO:0000255" key="1">
    <source>
        <dbReference type="HAMAP-Rule" id="MF_00412"/>
    </source>
</evidence>
<feature type="chain" id="PRO_1000080482" description="Gamma-glutamyl phosphate reductase">
    <location>
        <begin position="1"/>
        <end position="421"/>
    </location>
</feature>
<reference key="1">
    <citation type="journal article" date="2010" name="ISME J.">
        <title>The complete genome sequence of the algal symbiont Dinoroseobacter shibae: a hitchhiker's guide to life in the sea.</title>
        <authorList>
            <person name="Wagner-Dobler I."/>
            <person name="Ballhausen B."/>
            <person name="Berger M."/>
            <person name="Brinkhoff T."/>
            <person name="Buchholz I."/>
            <person name="Bunk B."/>
            <person name="Cypionka H."/>
            <person name="Daniel R."/>
            <person name="Drepper T."/>
            <person name="Gerdts G."/>
            <person name="Hahnke S."/>
            <person name="Han C."/>
            <person name="Jahn D."/>
            <person name="Kalhoefer D."/>
            <person name="Kiss H."/>
            <person name="Klenk H.P."/>
            <person name="Kyrpides N."/>
            <person name="Liebl W."/>
            <person name="Liesegang H."/>
            <person name="Meincke L."/>
            <person name="Pati A."/>
            <person name="Petersen J."/>
            <person name="Piekarski T."/>
            <person name="Pommerenke C."/>
            <person name="Pradella S."/>
            <person name="Pukall R."/>
            <person name="Rabus R."/>
            <person name="Stackebrandt E."/>
            <person name="Thole S."/>
            <person name="Thompson L."/>
            <person name="Tielen P."/>
            <person name="Tomasch J."/>
            <person name="von Jan M."/>
            <person name="Wanphrut N."/>
            <person name="Wichels A."/>
            <person name="Zech H."/>
            <person name="Simon M."/>
        </authorList>
    </citation>
    <scope>NUCLEOTIDE SEQUENCE [LARGE SCALE GENOMIC DNA]</scope>
    <source>
        <strain>DSM 16493 / NCIMB 14021 / DFL 12</strain>
    </source>
</reference>
<name>PROA_DINSH</name>
<gene>
    <name evidence="1" type="primary">proA</name>
    <name type="ordered locus">Dshi_1469</name>
</gene>
<protein>
    <recommendedName>
        <fullName evidence="1">Gamma-glutamyl phosphate reductase</fullName>
        <shortName evidence="1">GPR</shortName>
        <ecNumber evidence="1">1.2.1.41</ecNumber>
    </recommendedName>
    <alternativeName>
        <fullName evidence="1">Glutamate-5-semialdehyde dehydrogenase</fullName>
    </alternativeName>
    <alternativeName>
        <fullName evidence="1">Glutamyl-gamma-semialdehyde dehydrogenase</fullName>
        <shortName evidence="1">GSA dehydrogenase</shortName>
    </alternativeName>
</protein>
<proteinExistence type="inferred from homology"/>
<comment type="function">
    <text evidence="1">Catalyzes the NADPH-dependent reduction of L-glutamate 5-phosphate into L-glutamate 5-semialdehyde and phosphate. The product spontaneously undergoes cyclization to form 1-pyrroline-5-carboxylate.</text>
</comment>
<comment type="catalytic activity">
    <reaction evidence="1">
        <text>L-glutamate 5-semialdehyde + phosphate + NADP(+) = L-glutamyl 5-phosphate + NADPH + H(+)</text>
        <dbReference type="Rhea" id="RHEA:19541"/>
        <dbReference type="ChEBI" id="CHEBI:15378"/>
        <dbReference type="ChEBI" id="CHEBI:43474"/>
        <dbReference type="ChEBI" id="CHEBI:57783"/>
        <dbReference type="ChEBI" id="CHEBI:58066"/>
        <dbReference type="ChEBI" id="CHEBI:58274"/>
        <dbReference type="ChEBI" id="CHEBI:58349"/>
        <dbReference type="EC" id="1.2.1.41"/>
    </reaction>
</comment>
<comment type="pathway">
    <text evidence="1">Amino-acid biosynthesis; L-proline biosynthesis; L-glutamate 5-semialdehyde from L-glutamate: step 2/2.</text>
</comment>
<comment type="subcellular location">
    <subcellularLocation>
        <location evidence="1">Cytoplasm</location>
    </subcellularLocation>
</comment>
<comment type="similarity">
    <text evidence="1">Belongs to the gamma-glutamyl phosphate reductase family.</text>
</comment>
<accession>A8LK12</accession>